<dbReference type="EC" id="1.1.1.28"/>
<dbReference type="EMBL" id="U36928">
    <property type="protein sequence ID" value="AAB51772.1"/>
    <property type="molecule type" value="Genomic_DNA"/>
</dbReference>
<dbReference type="EMBL" id="U00096">
    <property type="protein sequence ID" value="AAC74462.1"/>
    <property type="molecule type" value="Genomic_DNA"/>
</dbReference>
<dbReference type="EMBL" id="AP009048">
    <property type="protein sequence ID" value="BAA14990.1"/>
    <property type="molecule type" value="Genomic_DNA"/>
</dbReference>
<dbReference type="PIR" id="G64888">
    <property type="entry name" value="G64888"/>
</dbReference>
<dbReference type="RefSeq" id="NP_415898.1">
    <property type="nucleotide sequence ID" value="NC_000913.3"/>
</dbReference>
<dbReference type="RefSeq" id="WP_000762236.1">
    <property type="nucleotide sequence ID" value="NZ_SSZK01000012.1"/>
</dbReference>
<dbReference type="PDB" id="5Z1Z">
    <property type="method" value="X-ray"/>
    <property type="resolution" value="1.97 A"/>
    <property type="chains" value="A/B/C/D=1-329"/>
</dbReference>
<dbReference type="PDBsum" id="5Z1Z"/>
<dbReference type="SMR" id="P52643"/>
<dbReference type="BioGRID" id="4259502">
    <property type="interactions" value="29"/>
</dbReference>
<dbReference type="DIP" id="DIP-10087N"/>
<dbReference type="FunCoup" id="P52643">
    <property type="interactions" value="472"/>
</dbReference>
<dbReference type="IntAct" id="P52643">
    <property type="interactions" value="4"/>
</dbReference>
<dbReference type="STRING" id="511145.b1380"/>
<dbReference type="jPOST" id="P52643"/>
<dbReference type="PaxDb" id="511145-b1380"/>
<dbReference type="EnsemblBacteria" id="AAC74462">
    <property type="protein sequence ID" value="AAC74462"/>
    <property type="gene ID" value="b1380"/>
</dbReference>
<dbReference type="GeneID" id="946315"/>
<dbReference type="KEGG" id="ecj:JW1375"/>
<dbReference type="KEGG" id="eco:b1380"/>
<dbReference type="KEGG" id="ecoc:C3026_08065"/>
<dbReference type="PATRIC" id="fig|1411691.4.peg.892"/>
<dbReference type="EchoBASE" id="EB2978"/>
<dbReference type="eggNOG" id="COG1052">
    <property type="taxonomic scope" value="Bacteria"/>
</dbReference>
<dbReference type="HOGENOM" id="CLU_019796_1_1_6"/>
<dbReference type="InParanoid" id="P52643"/>
<dbReference type="OMA" id="VIVTAHQ"/>
<dbReference type="OrthoDB" id="9805416at2"/>
<dbReference type="PhylomeDB" id="P52643"/>
<dbReference type="BioCyc" id="EcoCyc:DLACTDEHYDROGNAD-MONOMER"/>
<dbReference type="BioCyc" id="MetaCyc:DLACTDEHYDROGNAD-MONOMER"/>
<dbReference type="PRO" id="PR:P52643"/>
<dbReference type="Proteomes" id="UP000000625">
    <property type="component" value="Chromosome"/>
</dbReference>
<dbReference type="GO" id="GO:0005829">
    <property type="term" value="C:cytosol"/>
    <property type="evidence" value="ECO:0000314"/>
    <property type="project" value="EcoCyc"/>
</dbReference>
<dbReference type="GO" id="GO:0008720">
    <property type="term" value="F:D-lactate dehydrogenase activity"/>
    <property type="evidence" value="ECO:0000314"/>
    <property type="project" value="UniProtKB"/>
</dbReference>
<dbReference type="GO" id="GO:0042802">
    <property type="term" value="F:identical protein binding"/>
    <property type="evidence" value="ECO:0000314"/>
    <property type="project" value="EcoCyc"/>
</dbReference>
<dbReference type="GO" id="GO:0070404">
    <property type="term" value="F:NADH binding"/>
    <property type="evidence" value="ECO:0000314"/>
    <property type="project" value="EcoliWiki"/>
</dbReference>
<dbReference type="GO" id="GO:0006089">
    <property type="term" value="P:lactate metabolic process"/>
    <property type="evidence" value="ECO:0000314"/>
    <property type="project" value="UniProtKB"/>
</dbReference>
<dbReference type="GO" id="GO:0019664">
    <property type="term" value="P:mixed acid fermentation"/>
    <property type="evidence" value="ECO:0000314"/>
    <property type="project" value="EcoCyc"/>
</dbReference>
<dbReference type="GO" id="GO:0051289">
    <property type="term" value="P:protein homotetramerization"/>
    <property type="evidence" value="ECO:0000314"/>
    <property type="project" value="EcoCyc"/>
</dbReference>
<dbReference type="GO" id="GO:0009408">
    <property type="term" value="P:response to heat"/>
    <property type="evidence" value="ECO:0000270"/>
    <property type="project" value="EcoliWiki"/>
</dbReference>
<dbReference type="CDD" id="cd12183">
    <property type="entry name" value="LDH_like_2"/>
    <property type="match status" value="1"/>
</dbReference>
<dbReference type="FunFam" id="3.40.50.720:FF:000050">
    <property type="entry name" value="D-lactate dehydrogenase"/>
    <property type="match status" value="1"/>
</dbReference>
<dbReference type="Gene3D" id="3.40.50.720">
    <property type="entry name" value="NAD(P)-binding Rossmann-like Domain"/>
    <property type="match status" value="2"/>
</dbReference>
<dbReference type="InterPro" id="IPR006139">
    <property type="entry name" value="D-isomer_2_OHA_DH_cat_dom"/>
</dbReference>
<dbReference type="InterPro" id="IPR029753">
    <property type="entry name" value="D-isomer_DH_CS"/>
</dbReference>
<dbReference type="InterPro" id="IPR029752">
    <property type="entry name" value="D-isomer_DH_CS1"/>
</dbReference>
<dbReference type="InterPro" id="IPR006140">
    <property type="entry name" value="D-isomer_DH_NAD-bd"/>
</dbReference>
<dbReference type="InterPro" id="IPR036291">
    <property type="entry name" value="NAD(P)-bd_dom_sf"/>
</dbReference>
<dbReference type="PANTHER" id="PTHR43026">
    <property type="entry name" value="2-HYDROXYACID DEHYDROGENASE HOMOLOG 1-RELATED"/>
    <property type="match status" value="1"/>
</dbReference>
<dbReference type="PANTHER" id="PTHR43026:SF1">
    <property type="entry name" value="2-HYDROXYACID DEHYDROGENASE HOMOLOG 1-RELATED"/>
    <property type="match status" value="1"/>
</dbReference>
<dbReference type="Pfam" id="PF00389">
    <property type="entry name" value="2-Hacid_dh"/>
    <property type="match status" value="1"/>
</dbReference>
<dbReference type="Pfam" id="PF02826">
    <property type="entry name" value="2-Hacid_dh_C"/>
    <property type="match status" value="1"/>
</dbReference>
<dbReference type="SUPFAM" id="SSF52283">
    <property type="entry name" value="Formate/glycerate dehydrogenase catalytic domain-like"/>
    <property type="match status" value="1"/>
</dbReference>
<dbReference type="SUPFAM" id="SSF51735">
    <property type="entry name" value="NAD(P)-binding Rossmann-fold domains"/>
    <property type="match status" value="1"/>
</dbReference>
<dbReference type="PROSITE" id="PS00065">
    <property type="entry name" value="D_2_HYDROXYACID_DH_1"/>
    <property type="match status" value="1"/>
</dbReference>
<dbReference type="PROSITE" id="PS00670">
    <property type="entry name" value="D_2_HYDROXYACID_DH_2"/>
    <property type="match status" value="1"/>
</dbReference>
<dbReference type="PROSITE" id="PS00671">
    <property type="entry name" value="D_2_HYDROXYACID_DH_3"/>
    <property type="match status" value="1"/>
</dbReference>
<protein>
    <recommendedName>
        <fullName>D-lactate dehydrogenase</fullName>
        <shortName>D-LDH</shortName>
        <ecNumber>1.1.1.28</ecNumber>
    </recommendedName>
    <alternativeName>
        <fullName>Fermentative lactate dehydrogenase</fullName>
    </alternativeName>
</protein>
<reference key="1">
    <citation type="journal article" date="1997" name="Microbiology">
        <title>The ldhA gene encoding the fermentative lactate dehydrogenase of Escherichia coli.</title>
        <authorList>
            <person name="Bunch P.K."/>
            <person name="Mat-Jan F."/>
            <person name="Lee N."/>
            <person name="Clark D.P."/>
        </authorList>
    </citation>
    <scope>NUCLEOTIDE SEQUENCE [GENOMIC DNA]</scope>
    <source>
        <strain>K12</strain>
    </source>
</reference>
<reference key="2">
    <citation type="journal article" date="1996" name="DNA Res.">
        <title>A 570-kb DNA sequence of the Escherichia coli K-12 genome corresponding to the 28.0-40.1 min region on the linkage map.</title>
        <authorList>
            <person name="Aiba H."/>
            <person name="Baba T."/>
            <person name="Fujita K."/>
            <person name="Hayashi K."/>
            <person name="Inada T."/>
            <person name="Isono K."/>
            <person name="Itoh T."/>
            <person name="Kasai H."/>
            <person name="Kashimoto K."/>
            <person name="Kimura S."/>
            <person name="Kitakawa M."/>
            <person name="Kitagawa M."/>
            <person name="Makino K."/>
            <person name="Miki T."/>
            <person name="Mizobuchi K."/>
            <person name="Mori H."/>
            <person name="Mori T."/>
            <person name="Motomura K."/>
            <person name="Nakade S."/>
            <person name="Nakamura Y."/>
            <person name="Nashimoto H."/>
            <person name="Nishio Y."/>
            <person name="Oshima T."/>
            <person name="Saito N."/>
            <person name="Sampei G."/>
            <person name="Seki Y."/>
            <person name="Sivasundaram S."/>
            <person name="Tagami H."/>
            <person name="Takeda J."/>
            <person name="Takemoto K."/>
            <person name="Takeuchi Y."/>
            <person name="Wada C."/>
            <person name="Yamamoto Y."/>
            <person name="Horiuchi T."/>
        </authorList>
    </citation>
    <scope>NUCLEOTIDE SEQUENCE [LARGE SCALE GENOMIC DNA]</scope>
    <source>
        <strain>K12 / W3110 / ATCC 27325 / DSM 5911</strain>
    </source>
</reference>
<reference key="3">
    <citation type="journal article" date="1997" name="Science">
        <title>The complete genome sequence of Escherichia coli K-12.</title>
        <authorList>
            <person name="Blattner F.R."/>
            <person name="Plunkett G. III"/>
            <person name="Bloch C.A."/>
            <person name="Perna N.T."/>
            <person name="Burland V."/>
            <person name="Riley M."/>
            <person name="Collado-Vides J."/>
            <person name="Glasner J.D."/>
            <person name="Rode C.K."/>
            <person name="Mayhew G.F."/>
            <person name="Gregor J."/>
            <person name="Davis N.W."/>
            <person name="Kirkpatrick H.A."/>
            <person name="Goeden M.A."/>
            <person name="Rose D.J."/>
            <person name="Mau B."/>
            <person name="Shao Y."/>
        </authorList>
    </citation>
    <scope>NUCLEOTIDE SEQUENCE [LARGE SCALE GENOMIC DNA]</scope>
    <source>
        <strain>K12 / MG1655 / ATCC 47076</strain>
    </source>
</reference>
<reference key="4">
    <citation type="journal article" date="2006" name="Mol. Syst. Biol.">
        <title>Highly accurate genome sequences of Escherichia coli K-12 strains MG1655 and W3110.</title>
        <authorList>
            <person name="Hayashi K."/>
            <person name="Morooka N."/>
            <person name="Yamamoto Y."/>
            <person name="Fujita K."/>
            <person name="Isono K."/>
            <person name="Choi S."/>
            <person name="Ohtsubo E."/>
            <person name="Baba T."/>
            <person name="Wanner B.L."/>
            <person name="Mori H."/>
            <person name="Horiuchi T."/>
        </authorList>
    </citation>
    <scope>NUCLEOTIDE SEQUENCE [LARGE SCALE GENOMIC DNA]</scope>
    <source>
        <strain>K12 / W3110 / ATCC 27325 / DSM 5911</strain>
    </source>
</reference>
<reference key="5">
    <citation type="journal article" date="1968" name="J. Biol. Chem.">
        <title>Chemical characterization of D-lactate dehydrogenase from Escherichia coli B.</title>
        <authorList>
            <person name="Tarmy E.M."/>
            <person name="Kaplan N.O."/>
        </authorList>
    </citation>
    <scope>FUNCTION</scope>
    <scope>CATALYTIC ACTIVITY</scope>
</reference>
<reference key="6">
    <citation type="journal article" date="1993" name="J. Bacteriol.">
        <title>Characterization of twenty-six new heat shock genes of Escherichia coli.</title>
        <authorList>
            <person name="Chuang S.E."/>
            <person name="Blattner F.R."/>
        </authorList>
    </citation>
    <scope>CHARACTERIZATION AS A HEAT-SHOCK GENE</scope>
</reference>
<reference key="7">
    <citation type="journal article" date="1997" name="Electrophoresis">
        <title>Escherichia coli proteome analysis using the gene-protein database.</title>
        <authorList>
            <person name="VanBogelen R.A."/>
            <person name="Abshire K.Z."/>
            <person name="Moldover B."/>
            <person name="Olson E.R."/>
            <person name="Neidhardt F.C."/>
        </authorList>
    </citation>
    <scope>IDENTIFICATION BY 2D-GEL</scope>
</reference>
<feature type="chain" id="PRO_0000075952" description="D-lactate dehydrogenase">
    <location>
        <begin position="1"/>
        <end position="329"/>
    </location>
</feature>
<feature type="active site" evidence="1">
    <location>
        <position position="234"/>
    </location>
</feature>
<feature type="active site" evidence="1">
    <location>
        <position position="263"/>
    </location>
</feature>
<feature type="active site" description="Proton donor" evidence="1">
    <location>
        <position position="295"/>
    </location>
</feature>
<feature type="binding site" evidence="2">
    <location>
        <begin position="154"/>
        <end position="155"/>
    </location>
    <ligand>
        <name>NAD(+)</name>
        <dbReference type="ChEBI" id="CHEBI:57540"/>
    </ligand>
</feature>
<feature type="binding site" evidence="1">
    <location>
        <position position="174"/>
    </location>
    <ligand>
        <name>NAD(+)</name>
        <dbReference type="ChEBI" id="CHEBI:57540"/>
    </ligand>
</feature>
<feature type="binding site" evidence="2">
    <location>
        <begin position="205"/>
        <end position="206"/>
    </location>
    <ligand>
        <name>NAD(+)</name>
        <dbReference type="ChEBI" id="CHEBI:57540"/>
    </ligand>
</feature>
<feature type="binding site" evidence="2">
    <location>
        <position position="211"/>
    </location>
    <ligand>
        <name>NAD(+)</name>
        <dbReference type="ChEBI" id="CHEBI:57540"/>
    </ligand>
</feature>
<feature type="binding site" evidence="2">
    <location>
        <begin position="232"/>
        <end position="234"/>
    </location>
    <ligand>
        <name>NAD(+)</name>
        <dbReference type="ChEBI" id="CHEBI:57540"/>
    </ligand>
</feature>
<feature type="binding site" evidence="2">
    <location>
        <position position="258"/>
    </location>
    <ligand>
        <name>NAD(+)</name>
        <dbReference type="ChEBI" id="CHEBI:57540"/>
    </ligand>
</feature>
<feature type="strand" evidence="5">
    <location>
        <begin position="2"/>
        <end position="5"/>
    </location>
</feature>
<feature type="helix" evidence="5">
    <location>
        <begin position="10"/>
        <end position="20"/>
    </location>
</feature>
<feature type="turn" evidence="5">
    <location>
        <begin position="21"/>
        <end position="23"/>
    </location>
</feature>
<feature type="strand" evidence="5">
    <location>
        <begin position="26"/>
        <end position="29"/>
    </location>
</feature>
<feature type="turn" evidence="5">
    <location>
        <begin position="36"/>
        <end position="38"/>
    </location>
</feature>
<feature type="helix" evidence="5">
    <location>
        <begin position="39"/>
        <end position="42"/>
    </location>
</feature>
<feature type="strand" evidence="5">
    <location>
        <begin position="46"/>
        <end position="50"/>
    </location>
</feature>
<feature type="helix" evidence="5">
    <location>
        <begin position="58"/>
        <end position="66"/>
    </location>
</feature>
<feature type="strand" evidence="5">
    <location>
        <begin position="71"/>
        <end position="77"/>
    </location>
</feature>
<feature type="helix" evidence="5">
    <location>
        <begin position="84"/>
        <end position="90"/>
    </location>
</feature>
<feature type="strand" evidence="5">
    <location>
        <begin position="93"/>
        <end position="95"/>
    </location>
</feature>
<feature type="helix" evidence="5">
    <location>
        <begin position="102"/>
        <end position="117"/>
    </location>
</feature>
<feature type="helix" evidence="5">
    <location>
        <begin position="120"/>
        <end position="127"/>
    </location>
</feature>
<feature type="turn" evidence="5">
    <location>
        <begin position="128"/>
        <end position="130"/>
    </location>
</feature>
<feature type="strand" evidence="5">
    <location>
        <begin position="146"/>
        <end position="150"/>
    </location>
</feature>
<feature type="helix" evidence="5">
    <location>
        <begin position="154"/>
        <end position="165"/>
    </location>
</feature>
<feature type="strand" evidence="5">
    <location>
        <begin position="169"/>
        <end position="173"/>
    </location>
</feature>
<feature type="helix" evidence="5">
    <location>
        <begin position="179"/>
        <end position="183"/>
    </location>
</feature>
<feature type="helix" evidence="5">
    <location>
        <begin position="191"/>
        <end position="197"/>
    </location>
</feature>
<feature type="strand" evidence="5">
    <location>
        <begin position="199"/>
        <end position="203"/>
    </location>
</feature>
<feature type="helix" evidence="5">
    <location>
        <begin position="209"/>
        <end position="211"/>
    </location>
</feature>
<feature type="helix" evidence="5">
    <location>
        <begin position="217"/>
        <end position="222"/>
    </location>
</feature>
<feature type="strand" evidence="5">
    <location>
        <begin position="227"/>
        <end position="231"/>
    </location>
</feature>
<feature type="helix" evidence="5">
    <location>
        <begin position="235"/>
        <end position="237"/>
    </location>
</feature>
<feature type="helix" evidence="5">
    <location>
        <begin position="240"/>
        <end position="248"/>
    </location>
</feature>
<feature type="strand" evidence="5">
    <location>
        <begin position="251"/>
        <end position="258"/>
    </location>
</feature>
<feature type="helix" evidence="5">
    <location>
        <begin position="261"/>
        <end position="263"/>
    </location>
</feature>
<feature type="helix" evidence="5">
    <location>
        <begin position="280"/>
        <end position="287"/>
    </location>
</feature>
<feature type="strand" evidence="5">
    <location>
        <begin position="288"/>
        <end position="295"/>
    </location>
</feature>
<feature type="helix" evidence="5">
    <location>
        <begin position="301"/>
        <end position="319"/>
    </location>
</feature>
<feature type="strand" evidence="5">
    <location>
        <begin position="327"/>
        <end position="329"/>
    </location>
</feature>
<accession>P52643</accession>
<accession>P78152</accession>
<evidence type="ECO:0000250" key="1">
    <source>
        <dbReference type="UniProtKB" id="P26297"/>
    </source>
</evidence>
<evidence type="ECO:0000250" key="2">
    <source>
        <dbReference type="UniProtKB" id="P30901"/>
    </source>
</evidence>
<evidence type="ECO:0000269" key="3">
    <source>
    </source>
</evidence>
<evidence type="ECO:0000305" key="4"/>
<evidence type="ECO:0007829" key="5">
    <source>
        <dbReference type="PDB" id="5Z1Z"/>
    </source>
</evidence>
<gene>
    <name type="primary">ldhA</name>
    <name type="synonym">hslI</name>
    <name type="synonym">htpH</name>
    <name type="ordered locus">b1380</name>
    <name type="ordered locus">JW1375</name>
</gene>
<keyword id="KW-0002">3D-structure</keyword>
<keyword id="KW-0520">NAD</keyword>
<keyword id="KW-0560">Oxidoreductase</keyword>
<keyword id="KW-1185">Reference proteome</keyword>
<keyword id="KW-0346">Stress response</keyword>
<proteinExistence type="evidence at protein level"/>
<sequence length="329" mass="36535">MKLAVYSTKQYDKKYLQQVNESFGFELEFFDFLLTEKTAKTANGCEAVCIFVNDDGSRPVLEELKKHGVKYIALRCAGFNNVDLDAAKELGLKVVRVPAYDPEAVAEHAIGMMMTLNRRIHRAYQRTRDANFSLEGLTGFTMYGKTAGVIGTGKIGVAMLRILKGFGMRLLAFDPYPSAAALELGVEYVDLPTLFSESDVISLHCPLTPENYHLLNEAAFEQMKNGVMIVNTSRGALIDSQAAIEALKNQKIGSLGMDVYENERDLFFEDKSNDVIQDDVFRRLSACHNVLFTGHQAFLTAEALTSISQTTLQNLSNLEKGETCPNELV</sequence>
<name>LDHD_ECOLI</name>
<organism>
    <name type="scientific">Escherichia coli (strain K12)</name>
    <dbReference type="NCBI Taxonomy" id="83333"/>
    <lineage>
        <taxon>Bacteria</taxon>
        <taxon>Pseudomonadati</taxon>
        <taxon>Pseudomonadota</taxon>
        <taxon>Gammaproteobacteria</taxon>
        <taxon>Enterobacterales</taxon>
        <taxon>Enterobacteriaceae</taxon>
        <taxon>Escherichia</taxon>
    </lineage>
</organism>
<comment type="function">
    <text evidence="3">Fermentative lactate dehydrogenase.</text>
</comment>
<comment type="catalytic activity">
    <reaction evidence="3">
        <text>(R)-lactate + NAD(+) = pyruvate + NADH + H(+)</text>
        <dbReference type="Rhea" id="RHEA:16369"/>
        <dbReference type="ChEBI" id="CHEBI:15361"/>
        <dbReference type="ChEBI" id="CHEBI:15378"/>
        <dbReference type="ChEBI" id="CHEBI:16004"/>
        <dbReference type="ChEBI" id="CHEBI:57540"/>
        <dbReference type="ChEBI" id="CHEBI:57945"/>
        <dbReference type="EC" id="1.1.1.28"/>
    </reaction>
    <physiologicalReaction direction="right-to-left" evidence="3">
        <dbReference type="Rhea" id="RHEA:16371"/>
    </physiologicalReaction>
</comment>
<comment type="similarity">
    <text evidence="4">Belongs to the D-isomer specific 2-hydroxyacid dehydrogenase family.</text>
</comment>